<dbReference type="EC" id="3.2.2.23" evidence="2"/>
<dbReference type="EC" id="4.2.99.18" evidence="2"/>
<dbReference type="EMBL" id="CP000686">
    <property type="protein sequence ID" value="ABQ90334.1"/>
    <property type="molecule type" value="Genomic_DNA"/>
</dbReference>
<dbReference type="RefSeq" id="WP_011956680.1">
    <property type="nucleotide sequence ID" value="NC_009523.1"/>
</dbReference>
<dbReference type="SMR" id="A5UUN1"/>
<dbReference type="STRING" id="357808.RoseRS_1946"/>
<dbReference type="KEGG" id="rrs:RoseRS_1946"/>
<dbReference type="eggNOG" id="COG0266">
    <property type="taxonomic scope" value="Bacteria"/>
</dbReference>
<dbReference type="HOGENOM" id="CLU_038423_1_2_0"/>
<dbReference type="OrthoDB" id="9800855at2"/>
<dbReference type="Proteomes" id="UP000006554">
    <property type="component" value="Chromosome"/>
</dbReference>
<dbReference type="GO" id="GO:0034039">
    <property type="term" value="F:8-oxo-7,8-dihydroguanine DNA N-glycosylase activity"/>
    <property type="evidence" value="ECO:0007669"/>
    <property type="project" value="TreeGrafter"/>
</dbReference>
<dbReference type="GO" id="GO:0140078">
    <property type="term" value="F:class I DNA-(apurinic or apyrimidinic site) endonuclease activity"/>
    <property type="evidence" value="ECO:0007669"/>
    <property type="project" value="UniProtKB-EC"/>
</dbReference>
<dbReference type="GO" id="GO:0003684">
    <property type="term" value="F:damaged DNA binding"/>
    <property type="evidence" value="ECO:0007669"/>
    <property type="project" value="InterPro"/>
</dbReference>
<dbReference type="GO" id="GO:0008270">
    <property type="term" value="F:zinc ion binding"/>
    <property type="evidence" value="ECO:0007669"/>
    <property type="project" value="UniProtKB-UniRule"/>
</dbReference>
<dbReference type="GO" id="GO:0006284">
    <property type="term" value="P:base-excision repair"/>
    <property type="evidence" value="ECO:0007669"/>
    <property type="project" value="InterPro"/>
</dbReference>
<dbReference type="CDD" id="cd08966">
    <property type="entry name" value="EcFpg-like_N"/>
    <property type="match status" value="1"/>
</dbReference>
<dbReference type="FunFam" id="1.10.8.50:FF:000003">
    <property type="entry name" value="Formamidopyrimidine-DNA glycosylase"/>
    <property type="match status" value="1"/>
</dbReference>
<dbReference type="Gene3D" id="1.10.8.50">
    <property type="match status" value="1"/>
</dbReference>
<dbReference type="Gene3D" id="3.20.190.10">
    <property type="entry name" value="MutM-like, N-terminal"/>
    <property type="match status" value="1"/>
</dbReference>
<dbReference type="HAMAP" id="MF_00103">
    <property type="entry name" value="Fapy_DNA_glycosyl"/>
    <property type="match status" value="1"/>
</dbReference>
<dbReference type="InterPro" id="IPR015886">
    <property type="entry name" value="DNA_glyclase/AP_lyase_DNA-bd"/>
</dbReference>
<dbReference type="InterPro" id="IPR015887">
    <property type="entry name" value="DNA_glyclase_Znf_dom_DNA_BS"/>
</dbReference>
<dbReference type="InterPro" id="IPR020629">
    <property type="entry name" value="Formamido-pyr_DNA_Glyclase"/>
</dbReference>
<dbReference type="InterPro" id="IPR012319">
    <property type="entry name" value="FPG_cat"/>
</dbReference>
<dbReference type="InterPro" id="IPR035937">
    <property type="entry name" value="MutM-like_N-ter"/>
</dbReference>
<dbReference type="InterPro" id="IPR010979">
    <property type="entry name" value="Ribosomal_uS13-like_H2TH"/>
</dbReference>
<dbReference type="InterPro" id="IPR000214">
    <property type="entry name" value="Znf_DNA_glyclase/AP_lyase"/>
</dbReference>
<dbReference type="InterPro" id="IPR010663">
    <property type="entry name" value="Znf_FPG/IleRS"/>
</dbReference>
<dbReference type="NCBIfam" id="TIGR00577">
    <property type="entry name" value="fpg"/>
    <property type="match status" value="1"/>
</dbReference>
<dbReference type="NCBIfam" id="NF002211">
    <property type="entry name" value="PRK01103.1"/>
    <property type="match status" value="1"/>
</dbReference>
<dbReference type="PANTHER" id="PTHR22993">
    <property type="entry name" value="FORMAMIDOPYRIMIDINE-DNA GLYCOSYLASE"/>
    <property type="match status" value="1"/>
</dbReference>
<dbReference type="PANTHER" id="PTHR22993:SF9">
    <property type="entry name" value="FORMAMIDOPYRIMIDINE-DNA GLYCOSYLASE"/>
    <property type="match status" value="1"/>
</dbReference>
<dbReference type="Pfam" id="PF01149">
    <property type="entry name" value="Fapy_DNA_glyco"/>
    <property type="match status" value="1"/>
</dbReference>
<dbReference type="Pfam" id="PF06831">
    <property type="entry name" value="H2TH"/>
    <property type="match status" value="1"/>
</dbReference>
<dbReference type="Pfam" id="PF06827">
    <property type="entry name" value="zf-FPG_IleRS"/>
    <property type="match status" value="1"/>
</dbReference>
<dbReference type="SMART" id="SM00898">
    <property type="entry name" value="Fapy_DNA_glyco"/>
    <property type="match status" value="1"/>
</dbReference>
<dbReference type="SMART" id="SM01232">
    <property type="entry name" value="H2TH"/>
    <property type="match status" value="1"/>
</dbReference>
<dbReference type="SUPFAM" id="SSF57716">
    <property type="entry name" value="Glucocorticoid receptor-like (DNA-binding domain)"/>
    <property type="match status" value="1"/>
</dbReference>
<dbReference type="SUPFAM" id="SSF81624">
    <property type="entry name" value="N-terminal domain of MutM-like DNA repair proteins"/>
    <property type="match status" value="1"/>
</dbReference>
<dbReference type="SUPFAM" id="SSF46946">
    <property type="entry name" value="S13-like H2TH domain"/>
    <property type="match status" value="1"/>
</dbReference>
<dbReference type="PROSITE" id="PS51068">
    <property type="entry name" value="FPG_CAT"/>
    <property type="match status" value="1"/>
</dbReference>
<dbReference type="PROSITE" id="PS01242">
    <property type="entry name" value="ZF_FPG_1"/>
    <property type="match status" value="1"/>
</dbReference>
<dbReference type="PROSITE" id="PS51066">
    <property type="entry name" value="ZF_FPG_2"/>
    <property type="match status" value="1"/>
</dbReference>
<reference key="1">
    <citation type="submission" date="2007-04" db="EMBL/GenBank/DDBJ databases">
        <title>Complete sequence of Roseiflexus sp. RS-1.</title>
        <authorList>
            <consortium name="US DOE Joint Genome Institute"/>
            <person name="Copeland A."/>
            <person name="Lucas S."/>
            <person name="Lapidus A."/>
            <person name="Barry K."/>
            <person name="Detter J.C."/>
            <person name="Glavina del Rio T."/>
            <person name="Hammon N."/>
            <person name="Israni S."/>
            <person name="Dalin E."/>
            <person name="Tice H."/>
            <person name="Pitluck S."/>
            <person name="Chertkov O."/>
            <person name="Brettin T."/>
            <person name="Bruce D."/>
            <person name="Han C."/>
            <person name="Schmutz J."/>
            <person name="Larimer F."/>
            <person name="Land M."/>
            <person name="Hauser L."/>
            <person name="Kyrpides N."/>
            <person name="Mikhailova N."/>
            <person name="Bryant D.A."/>
            <person name="Richardson P."/>
        </authorList>
    </citation>
    <scope>NUCLEOTIDE SEQUENCE [LARGE SCALE GENOMIC DNA]</scope>
    <source>
        <strain>RS-1</strain>
    </source>
</reference>
<comment type="function">
    <text evidence="2">Involved in base excision repair of DNA damaged by oxidation or by mutagenic agents. Acts as a DNA glycosylase that recognizes and removes damaged bases. Has a preference for oxidized purines, such as 7,8-dihydro-8-oxoguanine (8-oxoG). Has AP (apurinic/apyrimidinic) lyase activity and introduces nicks in the DNA strand. Cleaves the DNA backbone by beta-delta elimination to generate a single-strand break at the site of the removed base with both 3'- and 5'-phosphates.</text>
</comment>
<comment type="catalytic activity">
    <reaction evidence="2">
        <text>Hydrolysis of DNA containing ring-opened 7-methylguanine residues, releasing 2,6-diamino-4-hydroxy-5-(N-methyl)formamidopyrimidine.</text>
        <dbReference type="EC" id="3.2.2.23"/>
    </reaction>
</comment>
<comment type="catalytic activity">
    <reaction evidence="2">
        <text>2'-deoxyribonucleotide-(2'-deoxyribose 5'-phosphate)-2'-deoxyribonucleotide-DNA = a 3'-end 2'-deoxyribonucleotide-(2,3-dehydro-2,3-deoxyribose 5'-phosphate)-DNA + a 5'-end 5'-phospho-2'-deoxyribonucleoside-DNA + H(+)</text>
        <dbReference type="Rhea" id="RHEA:66592"/>
        <dbReference type="Rhea" id="RHEA-COMP:13180"/>
        <dbReference type="Rhea" id="RHEA-COMP:16897"/>
        <dbReference type="Rhea" id="RHEA-COMP:17067"/>
        <dbReference type="ChEBI" id="CHEBI:15378"/>
        <dbReference type="ChEBI" id="CHEBI:136412"/>
        <dbReference type="ChEBI" id="CHEBI:157695"/>
        <dbReference type="ChEBI" id="CHEBI:167181"/>
        <dbReference type="EC" id="4.2.99.18"/>
    </reaction>
</comment>
<comment type="cofactor">
    <cofactor evidence="2">
        <name>Zn(2+)</name>
        <dbReference type="ChEBI" id="CHEBI:29105"/>
    </cofactor>
    <text evidence="2">Binds 1 zinc ion per subunit.</text>
</comment>
<comment type="subunit">
    <text evidence="2">Monomer.</text>
</comment>
<comment type="similarity">
    <text evidence="2">Belongs to the FPG family.</text>
</comment>
<accession>A5UUN1</accession>
<feature type="initiator methionine" description="Removed" evidence="1">
    <location>
        <position position="1"/>
    </location>
</feature>
<feature type="chain" id="PRO_1000008765" description="Formamidopyrimidine-DNA glycosylase">
    <location>
        <begin position="2"/>
        <end position="273"/>
    </location>
</feature>
<feature type="zinc finger region" description="FPG-type" evidence="2">
    <location>
        <begin position="239"/>
        <end position="273"/>
    </location>
</feature>
<feature type="active site" description="Schiff-base intermediate with DNA" evidence="2">
    <location>
        <position position="2"/>
    </location>
</feature>
<feature type="active site" description="Proton donor" evidence="2">
    <location>
        <position position="3"/>
    </location>
</feature>
<feature type="active site" description="Proton donor; for beta-elimination activity" evidence="2">
    <location>
        <position position="60"/>
    </location>
</feature>
<feature type="active site" description="Proton donor; for delta-elimination activity" evidence="2">
    <location>
        <position position="263"/>
    </location>
</feature>
<feature type="binding site" evidence="2">
    <location>
        <position position="94"/>
    </location>
    <ligand>
        <name>DNA</name>
        <dbReference type="ChEBI" id="CHEBI:16991"/>
    </ligand>
</feature>
<feature type="binding site" evidence="2">
    <location>
        <position position="113"/>
    </location>
    <ligand>
        <name>DNA</name>
        <dbReference type="ChEBI" id="CHEBI:16991"/>
    </ligand>
</feature>
<feature type="binding site" evidence="2">
    <location>
        <position position="154"/>
    </location>
    <ligand>
        <name>DNA</name>
        <dbReference type="ChEBI" id="CHEBI:16991"/>
    </ligand>
</feature>
<evidence type="ECO:0000250" key="1"/>
<evidence type="ECO:0000255" key="2">
    <source>
        <dbReference type="HAMAP-Rule" id="MF_00103"/>
    </source>
</evidence>
<name>FPG_ROSS1</name>
<keyword id="KW-0227">DNA damage</keyword>
<keyword id="KW-0234">DNA repair</keyword>
<keyword id="KW-0238">DNA-binding</keyword>
<keyword id="KW-0326">Glycosidase</keyword>
<keyword id="KW-0378">Hydrolase</keyword>
<keyword id="KW-0456">Lyase</keyword>
<keyword id="KW-0479">Metal-binding</keyword>
<keyword id="KW-0511">Multifunctional enzyme</keyword>
<keyword id="KW-0862">Zinc</keyword>
<keyword id="KW-0863">Zinc-finger</keyword>
<proteinExistence type="inferred from homology"/>
<organism>
    <name type="scientific">Roseiflexus sp. (strain RS-1)</name>
    <dbReference type="NCBI Taxonomy" id="357808"/>
    <lineage>
        <taxon>Bacteria</taxon>
        <taxon>Bacillati</taxon>
        <taxon>Chloroflexota</taxon>
        <taxon>Chloroflexia</taxon>
        <taxon>Chloroflexales</taxon>
        <taxon>Roseiflexineae</taxon>
        <taxon>Roseiflexaceae</taxon>
        <taxon>Roseiflexus</taxon>
    </lineage>
</organism>
<protein>
    <recommendedName>
        <fullName evidence="2">Formamidopyrimidine-DNA glycosylase</fullName>
        <shortName evidence="2">Fapy-DNA glycosylase</shortName>
        <ecNumber evidence="2">3.2.2.23</ecNumber>
    </recommendedName>
    <alternativeName>
        <fullName evidence="2">DNA-(apurinic or apyrimidinic site) lyase MutM</fullName>
        <shortName evidence="2">AP lyase MutM</shortName>
        <ecNumber evidence="2">4.2.99.18</ecNumber>
    </alternativeName>
</protein>
<sequence>MPELPEVQLAADSLGVQIVGARIVRVERLDWTRMVETPSPDEFITLLAGRQVHGWGRRAKWILLFLDGGWTLALHLRMSGSLTVQPADAPPDKHTHLVLRLDDGRQVFFRDPRKFGRARLLDADGRAALDAAHGDEPLSNAFTVERLAELLRGRKRAIKPLLLDQAVIAGIGNIYADEALWRARIHPLRPASDLSADEVAALHDGIRAALRQALTNGGSTLRDYRNSYGTRGTNQDHFNAYDREGQPCPRCGATIIKTVVAQRGTHYCPECQR</sequence>
<gene>
    <name evidence="2" type="primary">mutM</name>
    <name evidence="2" type="synonym">fpg</name>
    <name type="ordered locus">RoseRS_1946</name>
</gene>